<proteinExistence type="evidence at protein level"/>
<dbReference type="EMBL" id="X64324">
    <property type="protein sequence ID" value="CAA45609.1"/>
    <property type="molecule type" value="mRNA"/>
</dbReference>
<dbReference type="PIR" id="S22418">
    <property type="entry name" value="S22418"/>
</dbReference>
<dbReference type="SMR" id="P31231"/>
<dbReference type="GO" id="GO:0005783">
    <property type="term" value="C:endoplasmic reticulum"/>
    <property type="evidence" value="ECO:0000250"/>
    <property type="project" value="UniProtKB"/>
</dbReference>
<dbReference type="GO" id="GO:0005759">
    <property type="term" value="C:mitochondrial matrix"/>
    <property type="evidence" value="ECO:0007669"/>
    <property type="project" value="UniProtKB-SubCell"/>
</dbReference>
<dbReference type="GO" id="GO:0033018">
    <property type="term" value="C:sarcoplasmic reticulum lumen"/>
    <property type="evidence" value="ECO:0007669"/>
    <property type="project" value="UniProtKB-SubCell"/>
</dbReference>
<dbReference type="GO" id="GO:0033017">
    <property type="term" value="C:sarcoplasmic reticulum membrane"/>
    <property type="evidence" value="ECO:0007669"/>
    <property type="project" value="UniProtKB-SubCell"/>
</dbReference>
<dbReference type="GO" id="GO:0030018">
    <property type="term" value="C:Z disc"/>
    <property type="evidence" value="ECO:0007669"/>
    <property type="project" value="TreeGrafter"/>
</dbReference>
<dbReference type="GO" id="GO:0005509">
    <property type="term" value="F:calcium ion binding"/>
    <property type="evidence" value="ECO:0000250"/>
    <property type="project" value="UniProtKB"/>
</dbReference>
<dbReference type="GO" id="GO:0042802">
    <property type="term" value="F:identical protein binding"/>
    <property type="evidence" value="ECO:0000250"/>
    <property type="project" value="UniProtKB"/>
</dbReference>
<dbReference type="GO" id="GO:0051281">
    <property type="term" value="P:positive regulation of release of sequestered calcium ion into cytosol"/>
    <property type="evidence" value="ECO:0000250"/>
    <property type="project" value="UniProtKB"/>
</dbReference>
<dbReference type="GO" id="GO:1901341">
    <property type="term" value="P:positive regulation of store-operated calcium channel activity"/>
    <property type="evidence" value="ECO:0000250"/>
    <property type="project" value="UniProtKB"/>
</dbReference>
<dbReference type="GO" id="GO:0014809">
    <property type="term" value="P:regulation of skeletal muscle contraction by regulation of release of sequestered calcium ion"/>
    <property type="evidence" value="ECO:0007669"/>
    <property type="project" value="TreeGrafter"/>
</dbReference>
<dbReference type="GO" id="GO:2001256">
    <property type="term" value="P:regulation of store-operated calcium entry"/>
    <property type="evidence" value="ECO:0000250"/>
    <property type="project" value="UniProtKB"/>
</dbReference>
<dbReference type="CDD" id="cd03074">
    <property type="entry name" value="PDI_b'_Calsequestrin_C"/>
    <property type="match status" value="1"/>
</dbReference>
<dbReference type="CDD" id="cd03066">
    <property type="entry name" value="PDI_b_Calsequestrin_middle"/>
    <property type="match status" value="1"/>
</dbReference>
<dbReference type="CDD" id="cd03065">
    <property type="entry name" value="PDI_b_Calsequestrin_N"/>
    <property type="match status" value="1"/>
</dbReference>
<dbReference type="FunFam" id="3.40.30.10:FF:000031">
    <property type="entry name" value="Calsequestrin"/>
    <property type="match status" value="1"/>
</dbReference>
<dbReference type="FunFam" id="3.40.30.10:FF:000033">
    <property type="entry name" value="Calsequestrin"/>
    <property type="match status" value="1"/>
</dbReference>
<dbReference type="FunFam" id="3.40.30.10:FF:000047">
    <property type="entry name" value="Calsequestrin"/>
    <property type="match status" value="1"/>
</dbReference>
<dbReference type="Gene3D" id="3.40.30.10">
    <property type="entry name" value="Glutaredoxin"/>
    <property type="match status" value="3"/>
</dbReference>
<dbReference type="InterPro" id="IPR001393">
    <property type="entry name" value="Calsequestrin"/>
</dbReference>
<dbReference type="InterPro" id="IPR041860">
    <property type="entry name" value="Calsequestrin_C"/>
</dbReference>
<dbReference type="InterPro" id="IPR018233">
    <property type="entry name" value="Calsequestrin_CS"/>
</dbReference>
<dbReference type="InterPro" id="IPR041858">
    <property type="entry name" value="Calsequestrin_middle_dom"/>
</dbReference>
<dbReference type="InterPro" id="IPR041859">
    <property type="entry name" value="Calsequestrin_N"/>
</dbReference>
<dbReference type="InterPro" id="IPR036249">
    <property type="entry name" value="Thioredoxin-like_sf"/>
</dbReference>
<dbReference type="PANTHER" id="PTHR10033">
    <property type="entry name" value="CALSEQUESTRIN"/>
    <property type="match status" value="1"/>
</dbReference>
<dbReference type="PANTHER" id="PTHR10033:SF14">
    <property type="entry name" value="CALSEQUESTRIN-1"/>
    <property type="match status" value="1"/>
</dbReference>
<dbReference type="Pfam" id="PF01216">
    <property type="entry name" value="Calsequestrin"/>
    <property type="match status" value="1"/>
</dbReference>
<dbReference type="PRINTS" id="PR00312">
    <property type="entry name" value="CALSEQUESTRN"/>
</dbReference>
<dbReference type="SUPFAM" id="SSF52833">
    <property type="entry name" value="Thioredoxin-like"/>
    <property type="match status" value="3"/>
</dbReference>
<dbReference type="PROSITE" id="PS00863">
    <property type="entry name" value="CALSEQUESTRIN_1"/>
    <property type="match status" value="1"/>
</dbReference>
<dbReference type="PROSITE" id="PS00864">
    <property type="entry name" value="CALSEQUESTRIN_2"/>
    <property type="match status" value="1"/>
</dbReference>
<reference key="1">
    <citation type="journal article" date="1992" name="Biochem. J.">
        <title>Molecular cloning, functional expression and tissue distribution of the cDNA encoding frog skeletal muscle calsequestrin.</title>
        <authorList>
            <person name="Treves S."/>
            <person name="Vilsen B."/>
            <person name="Chiozzi P."/>
            <person name="Andersen J.P."/>
            <person name="Zorzato F."/>
        </authorList>
    </citation>
    <scope>NUCLEOTIDE SEQUENCE [MRNA]</scope>
    <scope>FUNCTION</scope>
    <scope>TISSUE SPECIFICITY</scope>
    <source>
        <tissue>Skeletal muscle</tissue>
    </source>
</reference>
<reference key="2">
    <citation type="journal article" date="1991" name="Biochem. Biophys. Res. Commun.">
        <title>Frog brain expresses a 60 KDa Ca2+ binding protein similar to mammalian calreticulin.</title>
        <authorList>
            <person name="Treveso S."/>
            <person name="Zorzato F."/>
            <person name="Chiozzi P."/>
            <person name="Melandri P."/>
            <person name="Volpe P."/>
            <person name="Pozzan T."/>
        </authorList>
    </citation>
    <scope>PROTEIN SEQUENCE OF 23-57</scope>
    <source>
        <tissue>Skeletal muscle</tissue>
    </source>
</reference>
<organism>
    <name type="scientific">Pelophylax lessonae</name>
    <name type="common">Pool frog</name>
    <name type="synonym">Rana lessonae</name>
    <dbReference type="NCBI Taxonomy" id="45623"/>
    <lineage>
        <taxon>Eukaryota</taxon>
        <taxon>Metazoa</taxon>
        <taxon>Chordata</taxon>
        <taxon>Craniata</taxon>
        <taxon>Vertebrata</taxon>
        <taxon>Euteleostomi</taxon>
        <taxon>Amphibia</taxon>
        <taxon>Batrachia</taxon>
        <taxon>Anura</taxon>
        <taxon>Neobatrachia</taxon>
        <taxon>Ranoidea</taxon>
        <taxon>Ranidae</taxon>
        <taxon>Pelophylax</taxon>
    </lineage>
</organism>
<comment type="function">
    <text evidence="1 2 3 6">Calsequestrin is a high-capacity, moderate affinity, calcium-binding protein and thus acts as an internal calcium store in muscle (PubMed:1375450). Calcium ions are bound by clusters of acidic residues at the protein surface, often at the interface between subunits. Can bind around 80 Ca(2+) ions. Regulates the release of lumenal Ca(2+) via the calcium release channel RYR1; this plays an important role in triggering muscle contraction. Negatively regulates store-operated Ca(2+) entry (SOCE) activity (By similarity).</text>
</comment>
<comment type="subunit">
    <text evidence="2 3">Monomer; increases in response to a depletion of intracellular calcium. Homodimer. Homotetramer and homopolymer. Can form linear homooligomers. Ca(2+) ions promote oligomerization.</text>
</comment>
<comment type="subcellular location">
    <subcellularLocation>
        <location evidence="3">Endoplasmic reticulum</location>
    </subcellularLocation>
    <subcellularLocation>
        <location evidence="3">Sarcoplasmic reticulum</location>
    </subcellularLocation>
    <subcellularLocation>
        <location evidence="2">Sarcoplasmic reticulum lumen</location>
    </subcellularLocation>
    <subcellularLocation>
        <location>Sarcoplasmic reticulum membrane</location>
        <topology>Peripheral membrane protein</topology>
        <orientation evidence="2">Lumenal side</orientation>
    </subcellularLocation>
    <subcellularLocation>
        <location evidence="1">Mitochondrion matrix</location>
    </subcellularLocation>
    <text evidence="2 3">This isoform of calsequestrin occurs in the sarcoplasmic reticulum's terminal cisternae luminal spaces of fast skeletal muscle cells. Preferentially forms linear and round aggregates in the endoplasmic reticulum (ER) of resting cells. In a minority of cells, homogeneously detected in the ER lumen. Colocalizes with STIM1 at endoplasmic reticulum in response to a depletion of intracellular calcium.</text>
</comment>
<comment type="tissue specificity">
    <text evidence="6">Detected in skeletal muscle (at protein level). Detected in skeletal muscle.</text>
</comment>
<comment type="similarity">
    <text evidence="8">Belongs to the calsequestrin family.</text>
</comment>
<feature type="signal peptide" evidence="7">
    <location>
        <begin position="1"/>
        <end position="22"/>
    </location>
</feature>
<feature type="chain" id="PRO_0000004216" description="Calsequestrin-1">
    <location>
        <begin position="23"/>
        <end position="420"/>
    </location>
</feature>
<feature type="region of interest" description="Disordered" evidence="5">
    <location>
        <begin position="369"/>
        <end position="420"/>
    </location>
</feature>
<feature type="glycosylation site" description="N-linked (GlcNAc...) asparagine" evidence="4">
    <location>
        <position position="338"/>
    </location>
</feature>
<sequence>MKGPWLVLAALCLSLANLGPRGEDGLDFPEYDGEDRVIHISLKNYKAALKKYEVLALLYHEPIGDDKASQRQFEMEELILELAAQVLEDKGVGFGLVDSEDDAAVAKKLGLDEEDSIYVFKDDEMIEYDGEFSADTLVEFLLDVLEDPVEFIDGSHELAAFENLDDEPKLIGYFKNEDSEHYKAYEDAAEEFHPYIPFFATFDAKVAKTLTLKLNEIDYYEPFHDEPITIPSKPNSEKEIVDFLHQHKRPTLRKLRPDSMYETWEDDLNGIHIVAFAEEDDPDGYEFLQIIKEVAEDNTDNPDLSIIWIDPEDFPLLIPYWEEKFGIDLSRPHIGVVNVTDADSVWMDMDDEEDLPTVDELEDWIEDVLEGEVNTEDDDDDDDDDDDDDDDDDDDDDDDDDDDDDDDDDDDDDDDDDDDD</sequence>
<evidence type="ECO:0000250" key="1">
    <source>
        <dbReference type="UniProtKB" id="O09165"/>
    </source>
</evidence>
<evidence type="ECO:0000250" key="2">
    <source>
        <dbReference type="UniProtKB" id="P07221"/>
    </source>
</evidence>
<evidence type="ECO:0000250" key="3">
    <source>
        <dbReference type="UniProtKB" id="P31415"/>
    </source>
</evidence>
<evidence type="ECO:0000255" key="4"/>
<evidence type="ECO:0000256" key="5">
    <source>
        <dbReference type="SAM" id="MobiDB-lite"/>
    </source>
</evidence>
<evidence type="ECO:0000269" key="6">
    <source>
    </source>
</evidence>
<evidence type="ECO:0000269" key="7">
    <source>
    </source>
</evidence>
<evidence type="ECO:0000305" key="8"/>
<name>CASQ1_PELLE</name>
<accession>P31231</accession>
<protein>
    <recommendedName>
        <fullName>Calsequestrin-1</fullName>
    </recommendedName>
    <alternativeName>
        <fullName>Calsequestrin, skeletal muscle isoform</fullName>
    </alternativeName>
</protein>
<keyword id="KW-0106">Calcium</keyword>
<keyword id="KW-0903">Direct protein sequencing</keyword>
<keyword id="KW-0256">Endoplasmic reticulum</keyword>
<keyword id="KW-0325">Glycoprotein</keyword>
<keyword id="KW-0472">Membrane</keyword>
<keyword id="KW-0479">Metal-binding</keyword>
<keyword id="KW-0496">Mitochondrion</keyword>
<keyword id="KW-0514">Muscle protein</keyword>
<keyword id="KW-0703">Sarcoplasmic reticulum</keyword>
<keyword id="KW-0732">Signal</keyword>